<keyword id="KW-0028">Amino-acid biosynthesis</keyword>
<keyword id="KW-0057">Aromatic amino acid biosynthesis</keyword>
<keyword id="KW-0456">Lyase</keyword>
<keyword id="KW-1185">Reference proteome</keyword>
<keyword id="KW-0822">Tryptophan biosynthesis</keyword>
<name>TRPA_ALKMQ</name>
<reference key="1">
    <citation type="journal article" date="2016" name="Genome Announc.">
        <title>Complete genome sequence of Alkaliphilus metalliredigens strain QYMF, an alkaliphilic and metal-reducing bacterium isolated from borax-contaminated leachate ponds.</title>
        <authorList>
            <person name="Hwang C."/>
            <person name="Copeland A."/>
            <person name="Lucas S."/>
            <person name="Lapidus A."/>
            <person name="Barry K."/>
            <person name="Detter J.C."/>
            <person name="Glavina Del Rio T."/>
            <person name="Hammon N."/>
            <person name="Israni S."/>
            <person name="Dalin E."/>
            <person name="Tice H."/>
            <person name="Pitluck S."/>
            <person name="Chertkov O."/>
            <person name="Brettin T."/>
            <person name="Bruce D."/>
            <person name="Han C."/>
            <person name="Schmutz J."/>
            <person name="Larimer F."/>
            <person name="Land M.L."/>
            <person name="Hauser L."/>
            <person name="Kyrpides N."/>
            <person name="Mikhailova N."/>
            <person name="Ye Q."/>
            <person name="Zhou J."/>
            <person name="Richardson P."/>
            <person name="Fields M.W."/>
        </authorList>
    </citation>
    <scope>NUCLEOTIDE SEQUENCE [LARGE SCALE GENOMIC DNA]</scope>
    <source>
        <strain>QYMF</strain>
    </source>
</reference>
<feature type="chain" id="PRO_1000076345" description="Tryptophan synthase alpha chain">
    <location>
        <begin position="1"/>
        <end position="266"/>
    </location>
</feature>
<feature type="active site" description="Proton acceptor" evidence="1">
    <location>
        <position position="50"/>
    </location>
</feature>
<feature type="active site" description="Proton acceptor" evidence="1">
    <location>
        <position position="61"/>
    </location>
</feature>
<comment type="function">
    <text evidence="1">The alpha subunit is responsible for the aldol cleavage of indoleglycerol phosphate to indole and glyceraldehyde 3-phosphate.</text>
</comment>
<comment type="catalytic activity">
    <reaction evidence="1">
        <text>(1S,2R)-1-C-(indol-3-yl)glycerol 3-phosphate + L-serine = D-glyceraldehyde 3-phosphate + L-tryptophan + H2O</text>
        <dbReference type="Rhea" id="RHEA:10532"/>
        <dbReference type="ChEBI" id="CHEBI:15377"/>
        <dbReference type="ChEBI" id="CHEBI:33384"/>
        <dbReference type="ChEBI" id="CHEBI:57912"/>
        <dbReference type="ChEBI" id="CHEBI:58866"/>
        <dbReference type="ChEBI" id="CHEBI:59776"/>
        <dbReference type="EC" id="4.2.1.20"/>
    </reaction>
</comment>
<comment type="pathway">
    <text evidence="1">Amino-acid biosynthesis; L-tryptophan biosynthesis; L-tryptophan from chorismate: step 5/5.</text>
</comment>
<comment type="subunit">
    <text evidence="1">Tetramer of two alpha and two beta chains.</text>
</comment>
<comment type="similarity">
    <text evidence="1">Belongs to the TrpA family.</text>
</comment>
<gene>
    <name evidence="1" type="primary">trpA</name>
    <name type="ordered locus">Amet_1083</name>
</gene>
<dbReference type="EC" id="4.2.1.20" evidence="1"/>
<dbReference type="EMBL" id="CP000724">
    <property type="protein sequence ID" value="ABR47295.1"/>
    <property type="molecule type" value="Genomic_DNA"/>
</dbReference>
<dbReference type="RefSeq" id="WP_012062337.1">
    <property type="nucleotide sequence ID" value="NC_009633.1"/>
</dbReference>
<dbReference type="SMR" id="A6TM77"/>
<dbReference type="STRING" id="293826.Amet_1083"/>
<dbReference type="KEGG" id="amt:Amet_1083"/>
<dbReference type="eggNOG" id="COG0159">
    <property type="taxonomic scope" value="Bacteria"/>
</dbReference>
<dbReference type="HOGENOM" id="CLU_016734_0_0_9"/>
<dbReference type="UniPathway" id="UPA00035">
    <property type="reaction ID" value="UER00044"/>
</dbReference>
<dbReference type="Proteomes" id="UP000001572">
    <property type="component" value="Chromosome"/>
</dbReference>
<dbReference type="GO" id="GO:0005829">
    <property type="term" value="C:cytosol"/>
    <property type="evidence" value="ECO:0007669"/>
    <property type="project" value="TreeGrafter"/>
</dbReference>
<dbReference type="GO" id="GO:0004834">
    <property type="term" value="F:tryptophan synthase activity"/>
    <property type="evidence" value="ECO:0007669"/>
    <property type="project" value="UniProtKB-UniRule"/>
</dbReference>
<dbReference type="CDD" id="cd04724">
    <property type="entry name" value="Tryptophan_synthase_alpha"/>
    <property type="match status" value="1"/>
</dbReference>
<dbReference type="FunFam" id="3.20.20.70:FF:000037">
    <property type="entry name" value="Tryptophan synthase alpha chain"/>
    <property type="match status" value="1"/>
</dbReference>
<dbReference type="Gene3D" id="3.20.20.70">
    <property type="entry name" value="Aldolase class I"/>
    <property type="match status" value="1"/>
</dbReference>
<dbReference type="HAMAP" id="MF_00131">
    <property type="entry name" value="Trp_synth_alpha"/>
    <property type="match status" value="1"/>
</dbReference>
<dbReference type="InterPro" id="IPR013785">
    <property type="entry name" value="Aldolase_TIM"/>
</dbReference>
<dbReference type="InterPro" id="IPR011060">
    <property type="entry name" value="RibuloseP-bd_barrel"/>
</dbReference>
<dbReference type="InterPro" id="IPR018204">
    <property type="entry name" value="Trp_synthase_alpha_AS"/>
</dbReference>
<dbReference type="InterPro" id="IPR002028">
    <property type="entry name" value="Trp_synthase_suA"/>
</dbReference>
<dbReference type="NCBIfam" id="TIGR00262">
    <property type="entry name" value="trpA"/>
    <property type="match status" value="1"/>
</dbReference>
<dbReference type="PANTHER" id="PTHR43406:SF1">
    <property type="entry name" value="TRYPTOPHAN SYNTHASE ALPHA CHAIN, CHLOROPLASTIC"/>
    <property type="match status" value="1"/>
</dbReference>
<dbReference type="PANTHER" id="PTHR43406">
    <property type="entry name" value="TRYPTOPHAN SYNTHASE, ALPHA CHAIN"/>
    <property type="match status" value="1"/>
</dbReference>
<dbReference type="Pfam" id="PF00290">
    <property type="entry name" value="Trp_syntA"/>
    <property type="match status" value="1"/>
</dbReference>
<dbReference type="SUPFAM" id="SSF51366">
    <property type="entry name" value="Ribulose-phoshate binding barrel"/>
    <property type="match status" value="1"/>
</dbReference>
<dbReference type="PROSITE" id="PS00167">
    <property type="entry name" value="TRP_SYNTHASE_ALPHA"/>
    <property type="match status" value="1"/>
</dbReference>
<evidence type="ECO:0000255" key="1">
    <source>
        <dbReference type="HAMAP-Rule" id="MF_00131"/>
    </source>
</evidence>
<sequence>MISRITNKLQALKEYDEKALITYVTAGDPDLETTFDLVLAMEKAGADIIELGIPYSDPLADGPVIQRASQRALNAGANMEAIFELVIKLREKTQIPLVFLVYYNCVFKYGLETFLNRCQEIGIDGLIIPDLPLEERRELQVMMQQYPMDLIPLVAPTSEDRMKEIVQDAEGFIYCVSSTGVTGKRNSLAGNLEGFMQQLRTYTEIPLVIGFGISNSEMMDKLKNICDGFIIGSAVIEKIEAGLEDRSSVERVSKFIEKLYEFKNLG</sequence>
<accession>A6TM77</accession>
<protein>
    <recommendedName>
        <fullName evidence="1">Tryptophan synthase alpha chain</fullName>
        <ecNumber evidence="1">4.2.1.20</ecNumber>
    </recommendedName>
</protein>
<organism>
    <name type="scientific">Alkaliphilus metalliredigens (strain QYMF)</name>
    <dbReference type="NCBI Taxonomy" id="293826"/>
    <lineage>
        <taxon>Bacteria</taxon>
        <taxon>Bacillati</taxon>
        <taxon>Bacillota</taxon>
        <taxon>Clostridia</taxon>
        <taxon>Peptostreptococcales</taxon>
        <taxon>Natronincolaceae</taxon>
        <taxon>Alkaliphilus</taxon>
    </lineage>
</organism>
<proteinExistence type="inferred from homology"/>